<feature type="chain" id="PRO_0000083911" description="Zinc finger C4H2 domain-containing protein">
    <location>
        <begin position="1"/>
        <end position="224"/>
    </location>
</feature>
<feature type="zinc finger region" description="C4H2-type" evidence="2">
    <location>
        <begin position="189"/>
        <end position="206"/>
    </location>
</feature>
<feature type="coiled-coil region" evidence="1">
    <location>
        <begin position="11"/>
        <end position="104"/>
    </location>
</feature>
<feature type="splice variant" id="VSP_013469" description="In isoform 3." evidence="7">
    <location>
        <begin position="1"/>
        <end position="23"/>
    </location>
</feature>
<feature type="splice variant" id="VSP_047588" description="In isoform 5." evidence="7">
    <original>MADEQEIMCKLESIKEI</original>
    <variation>MIHFHLIFLYVA</variation>
    <location>
        <begin position="1"/>
        <end position="17"/>
    </location>
</feature>
<feature type="splice variant" id="VSP_042513" description="In isoform 4." evidence="7">
    <original>DYFEKQKAEWQTEPQEPPIPESLAAAAAAAQQLQVARKQDTRQTATFRQQPPPMKACLSCHQQIHRNAPICPLCKAKSRSRNPKKPKRKQDE</original>
    <variation>EPACHVTSKFTGMHLYALFARPRVGPGTPKSRNGSRMNKEREST</variation>
    <location>
        <begin position="133"/>
        <end position="224"/>
    </location>
</feature>
<feature type="splice variant" id="VSP_008517" description="In isoform 2." evidence="6">
    <original>D</original>
    <variation>E</variation>
    <location>
        <position position="133"/>
    </location>
</feature>
<feature type="splice variant" id="VSP_008518" description="In isoform 2." evidence="6">
    <location>
        <begin position="134"/>
        <end position="224"/>
    </location>
</feature>
<feature type="sequence variant" id="VAR_079397" description="In WRWF; no effect on subcellular localization; no loss of function; rescues interneurons differentiation when expressed in a zebrafish heterologous system; dbSNP:rs1057520299." evidence="4">
    <original>R</original>
    <variation>K</variation>
    <location>
        <position position="18"/>
    </location>
</feature>
<feature type="sequence variant" id="VAR_083952" description="In WRWFFR." evidence="5">
    <location>
        <begin position="23"/>
        <end position="224"/>
    </location>
</feature>
<feature type="sequence variant" id="VAR_069621" description="In WRWF; causes a decrease in synapse number and density; dbSNP:rs398122938." evidence="3">
    <original>V</original>
    <variation>L</variation>
    <location>
        <position position="63"/>
    </location>
</feature>
<feature type="sequence variant" id="VAR_079398" description="In WRWF; no effect on subcellular localization; partial loss of function; rescues partially interneurons differentiation when expressed in a zebrafish heterologous system; dbSNP:rs1057520297." evidence="4">
    <original>L</original>
    <variation>H</variation>
    <location>
        <position position="66"/>
    </location>
</feature>
<feature type="sequence variant" id="VAR_083953" description="In WRWFFR." evidence="5">
    <location>
        <begin position="67"/>
        <end position="224"/>
    </location>
</feature>
<feature type="sequence variant" id="VAR_083954" description="In WRWF." evidence="5">
    <original>H</original>
    <variation>Q</variation>
    <location>
        <position position="70"/>
    </location>
</feature>
<feature type="sequence variant" id="VAR_083955" description="In WRWFFR." evidence="5">
    <location>
        <begin position="142"/>
        <end position="224"/>
    </location>
</feature>
<feature type="sequence variant" id="VAR_069622" description="In WRWF; causes a decrease in synapse number and density; dbSNP:rs879255235." evidence="3 5">
    <original>R</original>
    <variation>Q</variation>
    <location>
        <position position="198"/>
    </location>
</feature>
<feature type="sequence variant" id="VAR_083956" description="In WRWF; dbSNP:rs1929006117." evidence="5">
    <original>A</original>
    <variation>T</variation>
    <location>
        <position position="200"/>
    </location>
</feature>
<feature type="sequence variant" id="VAR_083957" description="In WRWF." evidence="5">
    <original>A</original>
    <variation>V</variation>
    <location>
        <position position="200"/>
    </location>
</feature>
<feature type="sequence variant" id="VAR_083958" description="In WRWF." evidence="5">
    <original>P</original>
    <variation>H</variation>
    <location>
        <position position="201"/>
    </location>
</feature>
<feature type="sequence variant" id="VAR_069623" description="In WRWF; causes a decrease in synapse number and density; dbSNP:rs398122939." evidence="3">
    <original>P</original>
    <variation>S</variation>
    <location>
        <position position="201"/>
    </location>
</feature>
<feature type="sequence variant" id="VAR_083959" description="In WRWFFR." evidence="5">
    <original>C</original>
    <variation>S</variation>
    <location>
        <position position="203"/>
    </location>
</feature>
<feature type="sequence variant" id="VAR_083960" description="In WRWFFR; dbSNP:rs1064795753." evidence="5">
    <original>C</original>
    <variation>F</variation>
    <location>
        <position position="206"/>
    </location>
</feature>
<feature type="sequence variant" id="VAR_069624" description="In WRWF; increased cytoplasmic subcellular localization; partial loss of function; rescues partially interneurons differentiation when expressed in a zebrafish heterologous system; dbSNP:rs879255236." evidence="3 4 5">
    <original>R</original>
    <variation>W</variation>
    <location>
        <position position="213"/>
    </location>
</feature>
<feature type="sequence variant" id="VAR_083961" description="In WRWF; dbSNP:rs1929002470." evidence="5">
    <original>K</original>
    <variation>R</variation>
    <location>
        <position position="217"/>
    </location>
</feature>
<feature type="sequence conflict" description="In Ref. 4; BAG53957." evidence="8" ref="4">
    <original>I</original>
    <variation>V</variation>
    <location>
        <position position="27"/>
    </location>
</feature>
<feature type="sequence conflict" description="In Ref. 4; BAG53957." evidence="8" ref="4">
    <original>M</original>
    <variation>T</variation>
    <location>
        <position position="52"/>
    </location>
</feature>
<feature type="sequence conflict" description="In Ref. 4; BAD96428." evidence="8" ref="4">
    <original>P</original>
    <variation>S</variation>
    <location>
        <position position="150"/>
    </location>
</feature>
<dbReference type="EMBL" id="AF270491">
    <property type="protein sequence ID" value="AAF75787.1"/>
    <property type="molecule type" value="mRNA"/>
</dbReference>
<dbReference type="EMBL" id="AB032992">
    <property type="protein sequence ID" value="BAA86480.1"/>
    <property type="status" value="ALT_INIT"/>
    <property type="molecule type" value="mRNA"/>
</dbReference>
<dbReference type="EMBL" id="AK022807">
    <property type="protein sequence ID" value="BAB14252.1"/>
    <property type="molecule type" value="mRNA"/>
</dbReference>
<dbReference type="EMBL" id="AK022918">
    <property type="protein sequence ID" value="BAB14308.1"/>
    <property type="molecule type" value="mRNA"/>
</dbReference>
<dbReference type="EMBL" id="AK315485">
    <property type="protein sequence ID" value="BAG37869.1"/>
    <property type="molecule type" value="mRNA"/>
</dbReference>
<dbReference type="EMBL" id="AK123763">
    <property type="protein sequence ID" value="BAG53957.1"/>
    <property type="molecule type" value="mRNA"/>
</dbReference>
<dbReference type="EMBL" id="AK293570">
    <property type="protein sequence ID" value="BAG57041.1"/>
    <property type="molecule type" value="mRNA"/>
</dbReference>
<dbReference type="EMBL" id="AK222708">
    <property type="protein sequence ID" value="BAD96428.1"/>
    <property type="molecule type" value="mRNA"/>
</dbReference>
<dbReference type="EMBL" id="AL355606">
    <property type="status" value="NOT_ANNOTATED_CDS"/>
    <property type="molecule type" value="Genomic_DNA"/>
</dbReference>
<dbReference type="EMBL" id="CH471132">
    <property type="protein sequence ID" value="EAX05408.1"/>
    <property type="molecule type" value="Genomic_DNA"/>
</dbReference>
<dbReference type="EMBL" id="CH471132">
    <property type="protein sequence ID" value="EAX05409.1"/>
    <property type="molecule type" value="Genomic_DNA"/>
</dbReference>
<dbReference type="EMBL" id="BC004411">
    <property type="protein sequence ID" value="AAH04411.1"/>
    <property type="molecule type" value="mRNA"/>
</dbReference>
<dbReference type="CCDS" id="CCDS14380.1">
    <molecule id="Q9NQZ6-1"/>
</dbReference>
<dbReference type="CCDS" id="CCDS55431.1">
    <molecule id="Q9NQZ6-3"/>
</dbReference>
<dbReference type="CCDS" id="CCDS55432.1">
    <molecule id="Q9NQZ6-4"/>
</dbReference>
<dbReference type="RefSeq" id="NP_001171503.1">
    <molecule id="Q9NQZ6-3"/>
    <property type="nucleotide sequence ID" value="NM_001178032.3"/>
</dbReference>
<dbReference type="RefSeq" id="NP_001171504.1">
    <molecule id="Q9NQZ6-4"/>
    <property type="nucleotide sequence ID" value="NM_001178033.3"/>
</dbReference>
<dbReference type="RefSeq" id="NP_001230733.1">
    <molecule id="Q9NQZ6-3"/>
    <property type="nucleotide sequence ID" value="NM_001243804.2"/>
</dbReference>
<dbReference type="RefSeq" id="NP_061154.1">
    <molecule id="Q9NQZ6-1"/>
    <property type="nucleotide sequence ID" value="NM_018684.4"/>
</dbReference>
<dbReference type="SMR" id="Q9NQZ6"/>
<dbReference type="BioGRID" id="120992">
    <property type="interactions" value="46"/>
</dbReference>
<dbReference type="FunCoup" id="Q9NQZ6">
    <property type="interactions" value="785"/>
</dbReference>
<dbReference type="IntAct" id="Q9NQZ6">
    <property type="interactions" value="39"/>
</dbReference>
<dbReference type="STRING" id="9606.ENSP00000363972"/>
<dbReference type="iPTMnet" id="Q9NQZ6"/>
<dbReference type="PhosphoSitePlus" id="Q9NQZ6"/>
<dbReference type="BioMuta" id="ZC4H2"/>
<dbReference type="DMDM" id="41688815"/>
<dbReference type="jPOST" id="Q9NQZ6"/>
<dbReference type="MassIVE" id="Q9NQZ6"/>
<dbReference type="PaxDb" id="9606-ENSP00000363972"/>
<dbReference type="PeptideAtlas" id="Q9NQZ6"/>
<dbReference type="ProteomicsDB" id="32368"/>
<dbReference type="ProteomicsDB" id="82234">
    <molecule id="Q9NQZ6-1"/>
</dbReference>
<dbReference type="ProteomicsDB" id="82235">
    <molecule id="Q9NQZ6-2"/>
</dbReference>
<dbReference type="ProteomicsDB" id="82236">
    <molecule id="Q9NQZ6-3"/>
</dbReference>
<dbReference type="ProteomicsDB" id="82237">
    <molecule id="Q9NQZ6-4"/>
</dbReference>
<dbReference type="Pumba" id="Q9NQZ6"/>
<dbReference type="Antibodypedia" id="27070">
    <property type="antibodies" value="101 antibodies from 18 providers"/>
</dbReference>
<dbReference type="DNASU" id="55906"/>
<dbReference type="Ensembl" id="ENST00000337990.2">
    <molecule id="Q9NQZ6-3"/>
    <property type="protein sequence ID" value="ENSP00000338650.2"/>
    <property type="gene ID" value="ENSG00000126970.17"/>
</dbReference>
<dbReference type="Ensembl" id="ENST00000374839.8">
    <molecule id="Q9NQZ6-1"/>
    <property type="protein sequence ID" value="ENSP00000363972.3"/>
    <property type="gene ID" value="ENSG00000126970.17"/>
</dbReference>
<dbReference type="Ensembl" id="ENST00000447788.6">
    <molecule id="Q9NQZ6-4"/>
    <property type="protein sequence ID" value="ENSP00000399126.2"/>
    <property type="gene ID" value="ENSG00000126970.17"/>
</dbReference>
<dbReference type="Ensembl" id="ENST00000488608.5">
    <molecule id="Q9NQZ6-2"/>
    <property type="protein sequence ID" value="ENSP00000515191.1"/>
    <property type="gene ID" value="ENSG00000126970.17"/>
</dbReference>
<dbReference type="GeneID" id="55906"/>
<dbReference type="KEGG" id="hsa:55906"/>
<dbReference type="MANE-Select" id="ENST00000374839.8">
    <property type="protein sequence ID" value="ENSP00000363972.3"/>
    <property type="RefSeq nucleotide sequence ID" value="NM_018684.4"/>
    <property type="RefSeq protein sequence ID" value="NP_061154.1"/>
</dbReference>
<dbReference type="UCSC" id="uc004dvu.4">
    <molecule id="Q9NQZ6-1"/>
    <property type="organism name" value="human"/>
</dbReference>
<dbReference type="AGR" id="HGNC:24931"/>
<dbReference type="CTD" id="55906"/>
<dbReference type="DisGeNET" id="55906"/>
<dbReference type="GeneCards" id="ZC4H2"/>
<dbReference type="HGNC" id="HGNC:24931">
    <property type="gene designation" value="ZC4H2"/>
</dbReference>
<dbReference type="HPA" id="ENSG00000126970">
    <property type="expression patterns" value="Low tissue specificity"/>
</dbReference>
<dbReference type="MalaCards" id="ZC4H2"/>
<dbReference type="MIM" id="300897">
    <property type="type" value="gene"/>
</dbReference>
<dbReference type="MIM" id="301041">
    <property type="type" value="phenotype"/>
</dbReference>
<dbReference type="MIM" id="314580">
    <property type="type" value="phenotype"/>
</dbReference>
<dbReference type="neXtProt" id="NX_Q9NQZ6"/>
<dbReference type="OpenTargets" id="ENSG00000126970"/>
<dbReference type="Orphanet" id="3454">
    <property type="disease" value="Wieacker-Wolff syndrome"/>
</dbReference>
<dbReference type="PharmGKB" id="PA164727643"/>
<dbReference type="VEuPathDB" id="HostDB:ENSG00000126970"/>
<dbReference type="eggNOG" id="KOG4451">
    <property type="taxonomic scope" value="Eukaryota"/>
</dbReference>
<dbReference type="GeneTree" id="ENSGT00390000018389"/>
<dbReference type="HOGENOM" id="CLU_1365899_0_0_1"/>
<dbReference type="InParanoid" id="Q9NQZ6"/>
<dbReference type="OMA" id="INMANRI"/>
<dbReference type="OrthoDB" id="20865at2759"/>
<dbReference type="PAN-GO" id="Q9NQZ6">
    <property type="GO annotations" value="2 GO annotations based on evolutionary models"/>
</dbReference>
<dbReference type="PhylomeDB" id="Q9NQZ6"/>
<dbReference type="TreeFam" id="TF315275"/>
<dbReference type="PathwayCommons" id="Q9NQZ6"/>
<dbReference type="SignaLink" id="Q9NQZ6"/>
<dbReference type="BioGRID-ORCS" id="55906">
    <property type="hits" value="7 hits in 775 CRISPR screens"/>
</dbReference>
<dbReference type="ChiTaRS" id="ZC4H2">
    <property type="organism name" value="human"/>
</dbReference>
<dbReference type="GeneWiki" id="KIAA1166"/>
<dbReference type="GenomeRNAi" id="55906"/>
<dbReference type="Pharos" id="Q9NQZ6">
    <property type="development level" value="Tbio"/>
</dbReference>
<dbReference type="PRO" id="PR:Q9NQZ6"/>
<dbReference type="Proteomes" id="UP000005640">
    <property type="component" value="Chromosome X"/>
</dbReference>
<dbReference type="RNAct" id="Q9NQZ6">
    <property type="molecule type" value="protein"/>
</dbReference>
<dbReference type="Bgee" id="ENSG00000126970">
    <property type="expression patterns" value="Expressed in ganglionic eminence and 134 other cell types or tissues"/>
</dbReference>
<dbReference type="GO" id="GO:0005737">
    <property type="term" value="C:cytoplasm"/>
    <property type="evidence" value="ECO:0000314"/>
    <property type="project" value="UniProtKB"/>
</dbReference>
<dbReference type="GO" id="GO:0043025">
    <property type="term" value="C:neuronal cell body"/>
    <property type="evidence" value="ECO:0007669"/>
    <property type="project" value="Ensembl"/>
</dbReference>
<dbReference type="GO" id="GO:0005634">
    <property type="term" value="C:nucleus"/>
    <property type="evidence" value="ECO:0000314"/>
    <property type="project" value="UniProtKB"/>
</dbReference>
<dbReference type="GO" id="GO:0045211">
    <property type="term" value="C:postsynaptic membrane"/>
    <property type="evidence" value="ECO:0000314"/>
    <property type="project" value="UniProtKB"/>
</dbReference>
<dbReference type="GO" id="GO:0032991">
    <property type="term" value="C:protein-containing complex"/>
    <property type="evidence" value="ECO:0000314"/>
    <property type="project" value="GO_Central"/>
</dbReference>
<dbReference type="GO" id="GO:0008270">
    <property type="term" value="F:zinc ion binding"/>
    <property type="evidence" value="ECO:0007669"/>
    <property type="project" value="UniProtKB-KW"/>
</dbReference>
<dbReference type="GO" id="GO:0007399">
    <property type="term" value="P:nervous system development"/>
    <property type="evidence" value="ECO:0000314"/>
    <property type="project" value="UniProtKB"/>
</dbReference>
<dbReference type="GO" id="GO:0007528">
    <property type="term" value="P:neuromuscular junction development"/>
    <property type="evidence" value="ECO:0000250"/>
    <property type="project" value="UniProtKB"/>
</dbReference>
<dbReference type="GO" id="GO:0003358">
    <property type="term" value="P:noradrenergic neuron development"/>
    <property type="evidence" value="ECO:0007669"/>
    <property type="project" value="Ensembl"/>
</dbReference>
<dbReference type="GO" id="GO:0051091">
    <property type="term" value="P:positive regulation of DNA-binding transcription factor activity"/>
    <property type="evidence" value="ECO:0000316"/>
    <property type="project" value="MGI"/>
</dbReference>
<dbReference type="GO" id="GO:0045666">
    <property type="term" value="P:positive regulation of neuron differentiation"/>
    <property type="evidence" value="ECO:0000315"/>
    <property type="project" value="UniProtKB"/>
</dbReference>
<dbReference type="GO" id="GO:0006513">
    <property type="term" value="P:protein monoubiquitination"/>
    <property type="evidence" value="ECO:0000316"/>
    <property type="project" value="MGI"/>
</dbReference>
<dbReference type="GO" id="GO:2000677">
    <property type="term" value="P:regulation of transcription regulatory region DNA binding"/>
    <property type="evidence" value="ECO:0000316"/>
    <property type="project" value="MGI"/>
</dbReference>
<dbReference type="GO" id="GO:0021522">
    <property type="term" value="P:spinal cord motor neuron differentiation"/>
    <property type="evidence" value="ECO:0000250"/>
    <property type="project" value="UniProtKB"/>
</dbReference>
<dbReference type="InterPro" id="IPR044069">
    <property type="entry name" value="ZF_C4H2"/>
</dbReference>
<dbReference type="InterPro" id="IPR018482">
    <property type="entry name" value="Znf-C4H2"/>
</dbReference>
<dbReference type="PANTHER" id="PTHR31058">
    <property type="entry name" value="ZINC FINGER C4H2 DOMAIN-CONTAINING PROTEIN"/>
    <property type="match status" value="1"/>
</dbReference>
<dbReference type="PANTHER" id="PTHR31058:SF2">
    <property type="entry name" value="ZINC FINGER C4H2 DOMAIN-CONTAINING PROTEIN"/>
    <property type="match status" value="1"/>
</dbReference>
<dbReference type="Pfam" id="PF10146">
    <property type="entry name" value="zf-C4H2"/>
    <property type="match status" value="1"/>
</dbReference>
<dbReference type="PROSITE" id="PS51896">
    <property type="entry name" value="ZF_C4H2"/>
    <property type="match status" value="1"/>
</dbReference>
<sequence>MADEQEIMCKLESIKEIRNKTLQMEKIKARLKAEFEALESEERHLKEYKQEMDLLLQEKMAHVEELRLIHADINVMENTIKQSENDLNKLLESTRRLHDEYKPLKEHVDALRMTLGLQRLPDLCEEEEKLSLDYFEKQKAEWQTEPQEPPIPESLAAAAAAAQQLQVARKQDTRQTATFRQQPPPMKACLSCHQQIHRNAPICPLCKAKSRSRNPKKPKRKQDE</sequence>
<proteinExistence type="evidence at protein level"/>
<evidence type="ECO:0000255" key="1"/>
<evidence type="ECO:0000255" key="2">
    <source>
        <dbReference type="PROSITE-ProRule" id="PRU01244"/>
    </source>
</evidence>
<evidence type="ECO:0000269" key="3">
    <source>
    </source>
</evidence>
<evidence type="ECO:0000269" key="4">
    <source>
    </source>
</evidence>
<evidence type="ECO:0000269" key="5">
    <source>
    </source>
</evidence>
<evidence type="ECO:0000303" key="6">
    <source>
    </source>
</evidence>
<evidence type="ECO:0000303" key="7">
    <source>
    </source>
</evidence>
<evidence type="ECO:0000305" key="8"/>
<organism>
    <name type="scientific">Homo sapiens</name>
    <name type="common">Human</name>
    <dbReference type="NCBI Taxonomy" id="9606"/>
    <lineage>
        <taxon>Eukaryota</taxon>
        <taxon>Metazoa</taxon>
        <taxon>Chordata</taxon>
        <taxon>Craniata</taxon>
        <taxon>Vertebrata</taxon>
        <taxon>Euteleostomi</taxon>
        <taxon>Mammalia</taxon>
        <taxon>Eutheria</taxon>
        <taxon>Euarchontoglires</taxon>
        <taxon>Primates</taxon>
        <taxon>Haplorrhini</taxon>
        <taxon>Catarrhini</taxon>
        <taxon>Hominidae</taxon>
        <taxon>Homo</taxon>
    </lineage>
</organism>
<keyword id="KW-0025">Alternative splicing</keyword>
<keyword id="KW-1003">Cell membrane</keyword>
<keyword id="KW-0175">Coiled coil</keyword>
<keyword id="KW-0963">Cytoplasm</keyword>
<keyword id="KW-0217">Developmental protein</keyword>
<keyword id="KW-0221">Differentiation</keyword>
<keyword id="KW-0225">Disease variant</keyword>
<keyword id="KW-0991">Intellectual disability</keyword>
<keyword id="KW-0472">Membrane</keyword>
<keyword id="KW-0479">Metal-binding</keyword>
<keyword id="KW-0539">Nucleus</keyword>
<keyword id="KW-0628">Postsynaptic cell membrane</keyword>
<keyword id="KW-1267">Proteomics identification</keyword>
<keyword id="KW-1185">Reference proteome</keyword>
<keyword id="KW-0770">Synapse</keyword>
<keyword id="KW-0862">Zinc</keyword>
<keyword id="KW-0863">Zinc-finger</keyword>
<name>ZC4H2_HUMAN</name>
<reference key="1">
    <citation type="journal article" date="2002" name="J. Immunol.">
        <title>Large scale identification of human hepatocellular carcinoma-associated antigens by autoantibodies.</title>
        <authorList>
            <person name="Wang Y."/>
            <person name="Han K.-J."/>
            <person name="Pang X.-W."/>
            <person name="Vaughan H.A."/>
            <person name="Qu W."/>
            <person name="Dong X.-Y."/>
            <person name="Peng J.-R."/>
            <person name="Zhao H.-T."/>
            <person name="Rui J.-A."/>
            <person name="Leng X.-S."/>
            <person name="Cebon J."/>
            <person name="Burgess A.W."/>
            <person name="Chen W.-F."/>
        </authorList>
    </citation>
    <scope>NUCLEOTIDE SEQUENCE [MRNA] (ISOFORM 1)</scope>
    <source>
        <tissue>Hepatoma</tissue>
    </source>
</reference>
<reference key="2">
    <citation type="journal article" date="1999" name="DNA Res.">
        <title>Characterization of cDNA clones selected by the GeneMark analysis from size-fractionated cDNA libraries from human brain.</title>
        <authorList>
            <person name="Hirosawa M."/>
            <person name="Nagase T."/>
            <person name="Ishikawa K."/>
            <person name="Kikuno R."/>
            <person name="Nomura N."/>
            <person name="Ohara O."/>
        </authorList>
    </citation>
    <scope>NUCLEOTIDE SEQUENCE [LARGE SCALE MRNA] (ISOFORM 2)</scope>
    <source>
        <tissue>Brain</tissue>
    </source>
</reference>
<reference key="3">
    <citation type="journal article" date="2004" name="Nat. Genet.">
        <title>Complete sequencing and characterization of 21,243 full-length human cDNAs.</title>
        <authorList>
            <person name="Ota T."/>
            <person name="Suzuki Y."/>
            <person name="Nishikawa T."/>
            <person name="Otsuki T."/>
            <person name="Sugiyama T."/>
            <person name="Irie R."/>
            <person name="Wakamatsu A."/>
            <person name="Hayashi K."/>
            <person name="Sato H."/>
            <person name="Nagai K."/>
            <person name="Kimura K."/>
            <person name="Makita H."/>
            <person name="Sekine M."/>
            <person name="Obayashi M."/>
            <person name="Nishi T."/>
            <person name="Shibahara T."/>
            <person name="Tanaka T."/>
            <person name="Ishii S."/>
            <person name="Yamamoto J."/>
            <person name="Saito K."/>
            <person name="Kawai Y."/>
            <person name="Isono Y."/>
            <person name="Nakamura Y."/>
            <person name="Nagahari K."/>
            <person name="Murakami K."/>
            <person name="Yasuda T."/>
            <person name="Iwayanagi T."/>
            <person name="Wagatsuma M."/>
            <person name="Shiratori A."/>
            <person name="Sudo H."/>
            <person name="Hosoiri T."/>
            <person name="Kaku Y."/>
            <person name="Kodaira H."/>
            <person name="Kondo H."/>
            <person name="Sugawara M."/>
            <person name="Takahashi M."/>
            <person name="Kanda K."/>
            <person name="Yokoi T."/>
            <person name="Furuya T."/>
            <person name="Kikkawa E."/>
            <person name="Omura Y."/>
            <person name="Abe K."/>
            <person name="Kamihara K."/>
            <person name="Katsuta N."/>
            <person name="Sato K."/>
            <person name="Tanikawa M."/>
            <person name="Yamazaki M."/>
            <person name="Ninomiya K."/>
            <person name="Ishibashi T."/>
            <person name="Yamashita H."/>
            <person name="Murakawa K."/>
            <person name="Fujimori K."/>
            <person name="Tanai H."/>
            <person name="Kimata M."/>
            <person name="Watanabe M."/>
            <person name="Hiraoka S."/>
            <person name="Chiba Y."/>
            <person name="Ishida S."/>
            <person name="Ono Y."/>
            <person name="Takiguchi S."/>
            <person name="Watanabe S."/>
            <person name="Yosida M."/>
            <person name="Hotuta T."/>
            <person name="Kusano J."/>
            <person name="Kanehori K."/>
            <person name="Takahashi-Fujii A."/>
            <person name="Hara H."/>
            <person name="Tanase T.-O."/>
            <person name="Nomura Y."/>
            <person name="Togiya S."/>
            <person name="Komai F."/>
            <person name="Hara R."/>
            <person name="Takeuchi K."/>
            <person name="Arita M."/>
            <person name="Imose N."/>
            <person name="Musashino K."/>
            <person name="Yuuki H."/>
            <person name="Oshima A."/>
            <person name="Sasaki N."/>
            <person name="Aotsuka S."/>
            <person name="Yoshikawa Y."/>
            <person name="Matsunawa H."/>
            <person name="Ichihara T."/>
            <person name="Shiohata N."/>
            <person name="Sano S."/>
            <person name="Moriya S."/>
            <person name="Momiyama H."/>
            <person name="Satoh N."/>
            <person name="Takami S."/>
            <person name="Terashima Y."/>
            <person name="Suzuki O."/>
            <person name="Nakagawa S."/>
            <person name="Senoh A."/>
            <person name="Mizoguchi H."/>
            <person name="Goto Y."/>
            <person name="Shimizu F."/>
            <person name="Wakebe H."/>
            <person name="Hishigaki H."/>
            <person name="Watanabe T."/>
            <person name="Sugiyama A."/>
            <person name="Takemoto M."/>
            <person name="Kawakami B."/>
            <person name="Yamazaki M."/>
            <person name="Watanabe K."/>
            <person name="Kumagai A."/>
            <person name="Itakura S."/>
            <person name="Fukuzumi Y."/>
            <person name="Fujimori Y."/>
            <person name="Komiyama M."/>
            <person name="Tashiro H."/>
            <person name="Tanigami A."/>
            <person name="Fujiwara T."/>
            <person name="Ono T."/>
            <person name="Yamada K."/>
            <person name="Fujii Y."/>
            <person name="Ozaki K."/>
            <person name="Hirao M."/>
            <person name="Ohmori Y."/>
            <person name="Kawabata A."/>
            <person name="Hikiji T."/>
            <person name="Kobatake N."/>
            <person name="Inagaki H."/>
            <person name="Ikema Y."/>
            <person name="Okamoto S."/>
            <person name="Okitani R."/>
            <person name="Kawakami T."/>
            <person name="Noguchi S."/>
            <person name="Itoh T."/>
            <person name="Shigeta K."/>
            <person name="Senba T."/>
            <person name="Matsumura K."/>
            <person name="Nakajima Y."/>
            <person name="Mizuno T."/>
            <person name="Morinaga M."/>
            <person name="Sasaki M."/>
            <person name="Togashi T."/>
            <person name="Oyama M."/>
            <person name="Hata H."/>
            <person name="Watanabe M."/>
            <person name="Komatsu T."/>
            <person name="Mizushima-Sugano J."/>
            <person name="Satoh T."/>
            <person name="Shirai Y."/>
            <person name="Takahashi Y."/>
            <person name="Nakagawa K."/>
            <person name="Okumura K."/>
            <person name="Nagase T."/>
            <person name="Nomura N."/>
            <person name="Kikuchi H."/>
            <person name="Masuho Y."/>
            <person name="Yamashita R."/>
            <person name="Nakai K."/>
            <person name="Yada T."/>
            <person name="Nakamura Y."/>
            <person name="Ohara O."/>
            <person name="Isogai T."/>
            <person name="Sugano S."/>
        </authorList>
    </citation>
    <scope>NUCLEOTIDE SEQUENCE [LARGE SCALE MRNA] (ISOFORMS 1; 3; 4 AND 5)</scope>
    <source>
        <tissue>Cerebellum</tissue>
        <tissue>Neuroblastoma</tissue>
        <tissue>Teratocarcinoma</tissue>
    </source>
</reference>
<reference key="4">
    <citation type="submission" date="2005-04" db="EMBL/GenBank/DDBJ databases">
        <authorList>
            <person name="Suzuki Y."/>
            <person name="Sugano S."/>
            <person name="Totoki Y."/>
            <person name="Toyoda A."/>
            <person name="Takeda T."/>
            <person name="Sakaki Y."/>
            <person name="Tanaka A."/>
            <person name="Yokoyama S."/>
        </authorList>
    </citation>
    <scope>NUCLEOTIDE SEQUENCE [LARGE SCALE MRNA] (ISOFORM 1)</scope>
    <source>
        <tissue>Colon</tissue>
    </source>
</reference>
<reference key="5">
    <citation type="journal article" date="2005" name="Nature">
        <title>The DNA sequence of the human X chromosome.</title>
        <authorList>
            <person name="Ross M.T."/>
            <person name="Grafham D.V."/>
            <person name="Coffey A.J."/>
            <person name="Scherer S."/>
            <person name="McLay K."/>
            <person name="Muzny D."/>
            <person name="Platzer M."/>
            <person name="Howell G.R."/>
            <person name="Burrows C."/>
            <person name="Bird C.P."/>
            <person name="Frankish A."/>
            <person name="Lovell F.L."/>
            <person name="Howe K.L."/>
            <person name="Ashurst J.L."/>
            <person name="Fulton R.S."/>
            <person name="Sudbrak R."/>
            <person name="Wen G."/>
            <person name="Jones M.C."/>
            <person name="Hurles M.E."/>
            <person name="Andrews T.D."/>
            <person name="Scott C.E."/>
            <person name="Searle S."/>
            <person name="Ramser J."/>
            <person name="Whittaker A."/>
            <person name="Deadman R."/>
            <person name="Carter N.P."/>
            <person name="Hunt S.E."/>
            <person name="Chen R."/>
            <person name="Cree A."/>
            <person name="Gunaratne P."/>
            <person name="Havlak P."/>
            <person name="Hodgson A."/>
            <person name="Metzker M.L."/>
            <person name="Richards S."/>
            <person name="Scott G."/>
            <person name="Steffen D."/>
            <person name="Sodergren E."/>
            <person name="Wheeler D.A."/>
            <person name="Worley K.C."/>
            <person name="Ainscough R."/>
            <person name="Ambrose K.D."/>
            <person name="Ansari-Lari M.A."/>
            <person name="Aradhya S."/>
            <person name="Ashwell R.I."/>
            <person name="Babbage A.K."/>
            <person name="Bagguley C.L."/>
            <person name="Ballabio A."/>
            <person name="Banerjee R."/>
            <person name="Barker G.E."/>
            <person name="Barlow K.F."/>
            <person name="Barrett I.P."/>
            <person name="Bates K.N."/>
            <person name="Beare D.M."/>
            <person name="Beasley H."/>
            <person name="Beasley O."/>
            <person name="Beck A."/>
            <person name="Bethel G."/>
            <person name="Blechschmidt K."/>
            <person name="Brady N."/>
            <person name="Bray-Allen S."/>
            <person name="Bridgeman A.M."/>
            <person name="Brown A.J."/>
            <person name="Brown M.J."/>
            <person name="Bonnin D."/>
            <person name="Bruford E.A."/>
            <person name="Buhay C."/>
            <person name="Burch P."/>
            <person name="Burford D."/>
            <person name="Burgess J."/>
            <person name="Burrill W."/>
            <person name="Burton J."/>
            <person name="Bye J.M."/>
            <person name="Carder C."/>
            <person name="Carrel L."/>
            <person name="Chako J."/>
            <person name="Chapman J.C."/>
            <person name="Chavez D."/>
            <person name="Chen E."/>
            <person name="Chen G."/>
            <person name="Chen Y."/>
            <person name="Chen Z."/>
            <person name="Chinault C."/>
            <person name="Ciccodicola A."/>
            <person name="Clark S.Y."/>
            <person name="Clarke G."/>
            <person name="Clee C.M."/>
            <person name="Clegg S."/>
            <person name="Clerc-Blankenburg K."/>
            <person name="Clifford K."/>
            <person name="Cobley V."/>
            <person name="Cole C.G."/>
            <person name="Conquer J.S."/>
            <person name="Corby N."/>
            <person name="Connor R.E."/>
            <person name="David R."/>
            <person name="Davies J."/>
            <person name="Davis C."/>
            <person name="Davis J."/>
            <person name="Delgado O."/>
            <person name="Deshazo D."/>
            <person name="Dhami P."/>
            <person name="Ding Y."/>
            <person name="Dinh H."/>
            <person name="Dodsworth S."/>
            <person name="Draper H."/>
            <person name="Dugan-Rocha S."/>
            <person name="Dunham A."/>
            <person name="Dunn M."/>
            <person name="Durbin K.J."/>
            <person name="Dutta I."/>
            <person name="Eades T."/>
            <person name="Ellwood M."/>
            <person name="Emery-Cohen A."/>
            <person name="Errington H."/>
            <person name="Evans K.L."/>
            <person name="Faulkner L."/>
            <person name="Francis F."/>
            <person name="Frankland J."/>
            <person name="Fraser A.E."/>
            <person name="Galgoczy P."/>
            <person name="Gilbert J."/>
            <person name="Gill R."/>
            <person name="Gloeckner G."/>
            <person name="Gregory S.G."/>
            <person name="Gribble S."/>
            <person name="Griffiths C."/>
            <person name="Grocock R."/>
            <person name="Gu Y."/>
            <person name="Gwilliam R."/>
            <person name="Hamilton C."/>
            <person name="Hart E.A."/>
            <person name="Hawes A."/>
            <person name="Heath P.D."/>
            <person name="Heitmann K."/>
            <person name="Hennig S."/>
            <person name="Hernandez J."/>
            <person name="Hinzmann B."/>
            <person name="Ho S."/>
            <person name="Hoffs M."/>
            <person name="Howden P.J."/>
            <person name="Huckle E.J."/>
            <person name="Hume J."/>
            <person name="Hunt P.J."/>
            <person name="Hunt A.R."/>
            <person name="Isherwood J."/>
            <person name="Jacob L."/>
            <person name="Johnson D."/>
            <person name="Jones S."/>
            <person name="de Jong P.J."/>
            <person name="Joseph S.S."/>
            <person name="Keenan S."/>
            <person name="Kelly S."/>
            <person name="Kershaw J.K."/>
            <person name="Khan Z."/>
            <person name="Kioschis P."/>
            <person name="Klages S."/>
            <person name="Knights A.J."/>
            <person name="Kosiura A."/>
            <person name="Kovar-Smith C."/>
            <person name="Laird G.K."/>
            <person name="Langford C."/>
            <person name="Lawlor S."/>
            <person name="Leversha M."/>
            <person name="Lewis L."/>
            <person name="Liu W."/>
            <person name="Lloyd C."/>
            <person name="Lloyd D.M."/>
            <person name="Loulseged H."/>
            <person name="Loveland J.E."/>
            <person name="Lovell J.D."/>
            <person name="Lozado R."/>
            <person name="Lu J."/>
            <person name="Lyne R."/>
            <person name="Ma J."/>
            <person name="Maheshwari M."/>
            <person name="Matthews L.H."/>
            <person name="McDowall J."/>
            <person name="McLaren S."/>
            <person name="McMurray A."/>
            <person name="Meidl P."/>
            <person name="Meitinger T."/>
            <person name="Milne S."/>
            <person name="Miner G."/>
            <person name="Mistry S.L."/>
            <person name="Morgan M."/>
            <person name="Morris S."/>
            <person name="Mueller I."/>
            <person name="Mullikin J.C."/>
            <person name="Nguyen N."/>
            <person name="Nordsiek G."/>
            <person name="Nyakatura G."/>
            <person name="O'dell C.N."/>
            <person name="Okwuonu G."/>
            <person name="Palmer S."/>
            <person name="Pandian R."/>
            <person name="Parker D."/>
            <person name="Parrish J."/>
            <person name="Pasternak S."/>
            <person name="Patel D."/>
            <person name="Pearce A.V."/>
            <person name="Pearson D.M."/>
            <person name="Pelan S.E."/>
            <person name="Perez L."/>
            <person name="Porter K.M."/>
            <person name="Ramsey Y."/>
            <person name="Reichwald K."/>
            <person name="Rhodes S."/>
            <person name="Ridler K.A."/>
            <person name="Schlessinger D."/>
            <person name="Schueler M.G."/>
            <person name="Sehra H.K."/>
            <person name="Shaw-Smith C."/>
            <person name="Shen H."/>
            <person name="Sheridan E.M."/>
            <person name="Shownkeen R."/>
            <person name="Skuce C.D."/>
            <person name="Smith M.L."/>
            <person name="Sotheran E.C."/>
            <person name="Steingruber H.E."/>
            <person name="Steward C.A."/>
            <person name="Storey R."/>
            <person name="Swann R.M."/>
            <person name="Swarbreck D."/>
            <person name="Tabor P.E."/>
            <person name="Taudien S."/>
            <person name="Taylor T."/>
            <person name="Teague B."/>
            <person name="Thomas K."/>
            <person name="Thorpe A."/>
            <person name="Timms K."/>
            <person name="Tracey A."/>
            <person name="Trevanion S."/>
            <person name="Tromans A.C."/>
            <person name="d'Urso M."/>
            <person name="Verduzco D."/>
            <person name="Villasana D."/>
            <person name="Waldron L."/>
            <person name="Wall M."/>
            <person name="Wang Q."/>
            <person name="Warren J."/>
            <person name="Warry G.L."/>
            <person name="Wei X."/>
            <person name="West A."/>
            <person name="Whitehead S.L."/>
            <person name="Whiteley M.N."/>
            <person name="Wilkinson J.E."/>
            <person name="Willey D.L."/>
            <person name="Williams G."/>
            <person name="Williams L."/>
            <person name="Williamson A."/>
            <person name="Williamson H."/>
            <person name="Wilming L."/>
            <person name="Woodmansey R.L."/>
            <person name="Wray P.W."/>
            <person name="Yen J."/>
            <person name="Zhang J."/>
            <person name="Zhou J."/>
            <person name="Zoghbi H."/>
            <person name="Zorilla S."/>
            <person name="Buck D."/>
            <person name="Reinhardt R."/>
            <person name="Poustka A."/>
            <person name="Rosenthal A."/>
            <person name="Lehrach H."/>
            <person name="Meindl A."/>
            <person name="Minx P.J."/>
            <person name="Hillier L.W."/>
            <person name="Willard H.F."/>
            <person name="Wilson R.K."/>
            <person name="Waterston R.H."/>
            <person name="Rice C.M."/>
            <person name="Vaudin M."/>
            <person name="Coulson A."/>
            <person name="Nelson D.L."/>
            <person name="Weinstock G."/>
            <person name="Sulston J.E."/>
            <person name="Durbin R.M."/>
            <person name="Hubbard T."/>
            <person name="Gibbs R.A."/>
            <person name="Beck S."/>
            <person name="Rogers J."/>
            <person name="Bentley D.R."/>
        </authorList>
    </citation>
    <scope>NUCLEOTIDE SEQUENCE [LARGE SCALE GENOMIC DNA]</scope>
</reference>
<reference key="6">
    <citation type="submission" date="2005-09" db="EMBL/GenBank/DDBJ databases">
        <authorList>
            <person name="Mural R.J."/>
            <person name="Istrail S."/>
            <person name="Sutton G.G."/>
            <person name="Florea L."/>
            <person name="Halpern A.L."/>
            <person name="Mobarry C.M."/>
            <person name="Lippert R."/>
            <person name="Walenz B."/>
            <person name="Shatkay H."/>
            <person name="Dew I."/>
            <person name="Miller J.R."/>
            <person name="Flanigan M.J."/>
            <person name="Edwards N.J."/>
            <person name="Bolanos R."/>
            <person name="Fasulo D."/>
            <person name="Halldorsson B.V."/>
            <person name="Hannenhalli S."/>
            <person name="Turner R."/>
            <person name="Yooseph S."/>
            <person name="Lu F."/>
            <person name="Nusskern D.R."/>
            <person name="Shue B.C."/>
            <person name="Zheng X.H."/>
            <person name="Zhong F."/>
            <person name="Delcher A.L."/>
            <person name="Huson D.H."/>
            <person name="Kravitz S.A."/>
            <person name="Mouchard L."/>
            <person name="Reinert K."/>
            <person name="Remington K.A."/>
            <person name="Clark A.G."/>
            <person name="Waterman M.S."/>
            <person name="Eichler E.E."/>
            <person name="Adams M.D."/>
            <person name="Hunkapiller M.W."/>
            <person name="Myers E.W."/>
            <person name="Venter J.C."/>
        </authorList>
    </citation>
    <scope>NUCLEOTIDE SEQUENCE [LARGE SCALE GENOMIC DNA]</scope>
</reference>
<reference key="7">
    <citation type="journal article" date="2004" name="Genome Res.">
        <title>The status, quality, and expansion of the NIH full-length cDNA project: the Mammalian Gene Collection (MGC).</title>
        <authorList>
            <consortium name="The MGC Project Team"/>
        </authorList>
    </citation>
    <scope>NUCLEOTIDE SEQUENCE [LARGE SCALE MRNA] (ISOFORM 1)</scope>
    <source>
        <tissue>Pancreas</tissue>
    </source>
</reference>
<reference key="8">
    <citation type="journal article" date="2013" name="Am. J. Hum. Genet.">
        <title>ZC4H2 mutations are associated with arthrogryposis multiplex congenita and intellectual disability through impairment of central and peripheral synaptic plasticity.</title>
        <authorList>
            <person name="Hirata H."/>
            <person name="Nanda I."/>
            <person name="van Riesen A."/>
            <person name="McMichael G."/>
            <person name="Hu H."/>
            <person name="Hambrock M."/>
            <person name="Papon M.A."/>
            <person name="Fischer U."/>
            <person name="Marouillat S."/>
            <person name="Ding C."/>
            <person name="Alirol S."/>
            <person name="Bienek M."/>
            <person name="Preisler-Adams S."/>
            <person name="Grimme A."/>
            <person name="Seelow D."/>
            <person name="Webster R."/>
            <person name="Haan E."/>
            <person name="Maclennan A."/>
            <person name="Stenzel W."/>
            <person name="Yap T.Y."/>
            <person name="Gardner A."/>
            <person name="Nguyen L.S."/>
            <person name="Shaw M."/>
            <person name="Lebrun N."/>
            <person name="Haas S.A."/>
            <person name="Kress W."/>
            <person name="Haaf T."/>
            <person name="Schellenberger E."/>
            <person name="Chelly J."/>
            <person name="Viot G."/>
            <person name="Shaffer L.G."/>
            <person name="Rosenfeld J.A."/>
            <person name="Kramer N."/>
            <person name="Falk R."/>
            <person name="El-Khechen D."/>
            <person name="Escobar L.F."/>
            <person name="Hennekam R."/>
            <person name="Wieacker P."/>
            <person name="Hubner C."/>
            <person name="Ropers H.H."/>
            <person name="Gecz J."/>
            <person name="Schuelke M."/>
            <person name="Laumonnier F."/>
            <person name="Kalscheuer V.M."/>
        </authorList>
    </citation>
    <scope>INVOLVEMENT IN WRWF</scope>
    <scope>VARIANTS WRWF LEU-63; GLN-198; SER-201 AND TRP-213</scope>
    <scope>CHARACTERIZATION OF VARIANTS WRWF LEU-63; GLN-198; SER-201 AND TRP-213</scope>
    <scope>FUNCTION</scope>
    <scope>SUBCELLULAR LOCATION</scope>
    <scope>TISSUE SPECIFICITY</scope>
</reference>
<reference key="9">
    <citation type="journal article" date="2015" name="Hum. Mol. Genet.">
        <title>ZC4H2, an XLID gene, is required for the generation of a specific subset of CNS interneurons.</title>
        <authorList>
            <person name="May M."/>
            <person name="Hwang K.S."/>
            <person name="Miles J."/>
            <person name="Williams C."/>
            <person name="Niranjan T."/>
            <person name="Kahler S.G."/>
            <person name="Chiurazzi P."/>
            <person name="Steindl K."/>
            <person name="Van Der Spek P.J."/>
            <person name="Swagemakers S."/>
            <person name="Mueller J."/>
            <person name="Stefl S."/>
            <person name="Alexov E."/>
            <person name="Ryu J.I."/>
            <person name="Choi J.H."/>
            <person name="Kim H.T."/>
            <person name="Tarpey P."/>
            <person name="Neri G."/>
            <person name="Holloway L."/>
            <person name="Skinner C."/>
            <person name="Stevenson R.E."/>
            <person name="Dorsky R.I."/>
            <person name="Wang T."/>
            <person name="Schwartz C.E."/>
            <person name="Kim C.H."/>
        </authorList>
    </citation>
    <scope>VARIANTS WRWF LYS-18; HIS-66 AND TRP-213</scope>
    <scope>CHARACTERIZATION OF VARIANTS WRWF LYS-18; HIS-66 AND TRP-213</scope>
    <scope>FUNCTION</scope>
    <scope>SUBCELLULAR LOCATION</scope>
    <scope>TISSUE SPECIFICITY</scope>
</reference>
<reference key="10">
    <citation type="journal article" date="2019" name="Hum. Mutat.">
        <title>Deleterious de novo variants of X-linked ZC4H2 in females cause a variable phenotype with neurogenic arthrogryposis multiplex congenita.</title>
        <authorList>
            <person name="Frints S.G.M."/>
            <person name="Hennig F."/>
            <person name="Colombo R."/>
            <person name="Jacquemont S."/>
            <person name="Terhal P."/>
            <person name="Zimmerman H.H."/>
            <person name="Hunt D."/>
            <person name="Mendelsohn B.A."/>
            <person name="Kordass U."/>
            <person name="Webster R."/>
            <person name="Sinnema M."/>
            <person name="Abdul-Rahman O."/>
            <person name="Suckow V."/>
            <person name="Fernandez-Jaen A."/>
            <person name="van Roozendaal K."/>
            <person name="Stevens S.J.C."/>
            <person name="Macville M.V.E."/>
            <person name="Al-Nasiry S."/>
            <person name="van Gassen K."/>
            <person name="Utzig N."/>
            <person name="Koudijs S.M."/>
            <person name="McGregor L."/>
            <person name="Maas S.M."/>
            <person name="Baralle D."/>
            <person name="Dixit A."/>
            <person name="Wieacker P."/>
            <person name="Lee M."/>
            <person name="Lee A.S."/>
            <person name="Engle E.C."/>
            <person name="Houge G."/>
            <person name="Gradek G.A."/>
            <person name="Douglas A.G.L."/>
            <person name="Longman C."/>
            <person name="Joss S."/>
            <person name="Velasco D."/>
            <person name="Hennekam R.C."/>
            <person name="Hirata H."/>
            <person name="Kalscheuer V.M."/>
        </authorList>
    </citation>
    <scope>INVOLVEMENT IN WRWFFR</scope>
    <scope>VARIANTS WRWFFR 23-GLN--GLU-224 DEL; 67-ARG--GLU-224 DEL; GLN-70; 142-TRP--GLU-224 DEL; HIS-201; SER-203; TRP-213 AND PHE-206</scope>
    <scope>VARIANTS WRWF GLN-198; THR-200; VAL-200; TRP-213 AND ARG-217</scope>
</reference>
<protein>
    <recommendedName>
        <fullName>Zinc finger C4H2 domain-containing protein</fullName>
    </recommendedName>
    <alternativeName>
        <fullName>Hepatocellular carcinoma-associated antigen 127</fullName>
    </alternativeName>
</protein>
<comment type="function">
    <text evidence="3 4">Plays a role in interneurons differentiation (PubMed:26056227). Involved in neuronal development and in neuromuscular junction formation.</text>
</comment>
<comment type="interaction">
    <interactant intactId="EBI-747993">
        <id>Q9NQZ6</id>
    </interactant>
    <interactant intactId="EBI-3904463">
        <id>P51164</id>
        <label>ATP4B</label>
    </interactant>
    <organismsDiffer>false</organismsDiffer>
    <experiments>3</experiments>
</comment>
<comment type="interaction">
    <interactant intactId="EBI-747993">
        <id>Q9NQZ6</id>
    </interactant>
    <interactant intactId="EBI-12149877">
        <id>Q8IY22-3</id>
        <label>CMIP</label>
    </interactant>
    <organismsDiffer>false</organismsDiffer>
    <experiments>3</experiments>
</comment>
<comment type="interaction">
    <interactant intactId="EBI-747993">
        <id>Q9NQZ6</id>
    </interactant>
    <interactant intactId="EBI-7225287">
        <id>Q96MY7</id>
        <label>FAM161B</label>
    </interactant>
    <organismsDiffer>false</organismsDiffer>
    <experiments>3</experiments>
</comment>
<comment type="interaction">
    <interactant intactId="EBI-747993">
        <id>Q9NQZ6</id>
    </interactant>
    <interactant intactId="EBI-746252">
        <id>Q96CN9</id>
        <label>GCC1</label>
    </interactant>
    <organismsDiffer>false</organismsDiffer>
    <experiments>3</experiments>
</comment>
<comment type="interaction">
    <interactant intactId="EBI-747993">
        <id>Q9NQZ6</id>
    </interactant>
    <interactant intactId="EBI-744104">
        <id>P55040</id>
        <label>GEM</label>
    </interactant>
    <organismsDiffer>false</organismsDiffer>
    <experiments>3</experiments>
</comment>
<comment type="interaction">
    <interactant intactId="EBI-747993">
        <id>Q9NQZ6</id>
    </interactant>
    <interactant intactId="EBI-3893317">
        <id>P09067</id>
        <label>HOXB5</label>
    </interactant>
    <organismsDiffer>false</organismsDiffer>
    <experiments>3</experiments>
</comment>
<comment type="interaction">
    <interactant intactId="EBI-747993">
        <id>Q9NQZ6</id>
    </interactant>
    <interactant intactId="EBI-739657">
        <id>Q9BQD3</id>
        <label>KXD1</label>
    </interactant>
    <organismsDiffer>false</organismsDiffer>
    <experiments>3</experiments>
</comment>
<comment type="interaction">
    <interactant intactId="EBI-747993">
        <id>Q9NQZ6</id>
    </interactant>
    <interactant intactId="EBI-12014286">
        <id>Q494U1-3</id>
        <label>PLEKHN1</label>
    </interactant>
    <organismsDiffer>false</organismsDiffer>
    <experiments>3</experiments>
</comment>
<comment type="interaction">
    <interactant intactId="EBI-747993">
        <id>Q9NQZ6</id>
    </interactant>
    <interactant intactId="EBI-752074">
        <id>P41219</id>
        <label>PRPH</label>
    </interactant>
    <organismsDiffer>false</organismsDiffer>
    <experiments>3</experiments>
</comment>
<comment type="interaction">
    <interactant intactId="EBI-747993">
        <id>Q9NQZ6</id>
    </interactant>
    <interactant intactId="EBI-12002474">
        <id>Q2KHN1</id>
        <label>RNF151</label>
    </interactant>
    <organismsDiffer>false</organismsDiffer>
    <experiments>3</experiments>
</comment>
<comment type="interaction">
    <interactant intactId="EBI-747993">
        <id>Q9NQZ6</id>
    </interactant>
    <interactant intactId="EBI-741237">
        <id>O60504</id>
        <label>SORBS3</label>
    </interactant>
    <organismsDiffer>false</organismsDiffer>
    <experiments>3</experiments>
</comment>
<comment type="interaction">
    <interactant intactId="EBI-747993">
        <id>Q9NQZ6</id>
    </interactant>
    <interactant intactId="EBI-10322867">
        <id>Q9UK11</id>
        <label>ZNF223</label>
    </interactant>
    <organismsDiffer>false</organismsDiffer>
    <experiments>4</experiments>
</comment>
<comment type="interaction">
    <interactant intactId="EBI-747993">
        <id>Q9NQZ6</id>
    </interactant>
    <interactant intactId="EBI-10177272">
        <id>P15622-3</id>
        <label>ZNF250</label>
    </interactant>
    <organismsDiffer>false</organismsDiffer>
    <experiments>6</experiments>
</comment>
<comment type="interaction">
    <interactant intactId="EBI-747993">
        <id>Q9NQZ6</id>
    </interactant>
    <interactant intactId="EBI-347633">
        <id>Q9H9D4</id>
        <label>ZNF408</label>
    </interactant>
    <organismsDiffer>false</organismsDiffer>
    <experiments>3</experiments>
</comment>
<comment type="interaction">
    <interactant intactId="EBI-747993">
        <id>Q9NQZ6</id>
    </interactant>
    <interactant intactId="EBI-1105370">
        <id>Q9ULM2</id>
        <label>ZNF490</label>
    </interactant>
    <organismsDiffer>false</organismsDiffer>
    <experiments>7</experiments>
</comment>
<comment type="interaction">
    <interactant intactId="EBI-747993">
        <id>Q9NQZ6</id>
    </interactant>
    <interactant intactId="EBI-10283126">
        <id>Q96C55</id>
        <label>ZNF524</label>
    </interactant>
    <organismsDiffer>false</organismsDiffer>
    <experiments>3</experiments>
</comment>
<comment type="interaction">
    <interactant intactId="EBI-747993">
        <id>Q9NQZ6</id>
    </interactant>
    <interactant intactId="EBI-12006574">
        <id>Q96BR6</id>
        <label>ZNF669</label>
    </interactant>
    <organismsDiffer>false</organismsDiffer>
    <experiments>5</experiments>
</comment>
<comment type="interaction">
    <interactant intactId="EBI-747993">
        <id>Q9NQZ6</id>
    </interactant>
    <interactant intactId="EBI-16429014">
        <id>A0A0S2Z5X4</id>
        <label>ZNF688</label>
    </interactant>
    <organismsDiffer>false</organismsDiffer>
    <experiments>3</experiments>
</comment>
<comment type="interaction">
    <interactant intactId="EBI-747993">
        <id>Q9NQZ6</id>
    </interactant>
    <interactant intactId="EBI-7254550">
        <id>P36508</id>
        <label>ZNF76</label>
    </interactant>
    <organismsDiffer>false</organismsDiffer>
    <experiments>5</experiments>
</comment>
<comment type="subcellular location">
    <subcellularLocation>
        <location evidence="3">Cytoplasm</location>
    </subcellularLocation>
    <subcellularLocation>
        <location evidence="3 4">Nucleus</location>
    </subcellularLocation>
    <subcellularLocation>
        <location evidence="3">Postsynaptic cell membrane</location>
    </subcellularLocation>
    <text>Upon transfection into mouse primary hippocampal neurons, localizes at excitatory, but not inhibitory, postsynaptic sites.</text>
</comment>
<comment type="alternative products">
    <event type="alternative splicing"/>
    <isoform>
        <id>Q9NQZ6-1</id>
        <name>1</name>
        <sequence type="displayed"/>
    </isoform>
    <isoform>
        <id>Q9NQZ6-2</id>
        <name>2</name>
        <sequence type="described" ref="VSP_008517 VSP_008518"/>
    </isoform>
    <isoform>
        <id>Q9NQZ6-3</id>
        <name>3</name>
        <sequence type="described" ref="VSP_013469"/>
    </isoform>
    <isoform>
        <id>Q9NQZ6-4</id>
        <name>4</name>
        <sequence type="described" ref="VSP_042513"/>
    </isoform>
    <isoform>
        <id>Q9NQZ6-5</id>
        <name>5</name>
        <sequence type="described" ref="VSP_047588"/>
    </isoform>
</comment>
<comment type="tissue specificity">
    <text evidence="3">Expressed in fetal tissues, including in brain, intestine, lung, kidney and muscle (PubMed:23623388). Isoform 1 is expressed in numerous fetal brain regions. Isoform 3 is highly expressed in numerous fetal brain regions and spinal cord (PubMed:26056227).</text>
</comment>
<comment type="disease" evidence="3 4 5">
    <disease id="DI-03791">
        <name>Wieacker-Wolf syndrome</name>
        <acronym>WRWF</acronym>
        <description>A severe X-linked recessive neurodevelopmental disorder affecting the central and peripheral nervous systems. It is characterized by onset of muscle weakness in utero (fetal akinesia). Affected boys are born with severe contractures, known as arthrogryposis, and have delayed motor development, facial and bulbar weakness, characteristic dysmorphic facial features, and skeletal abnormalities, such as hip dislocation, scoliosis, and pes equinovarus. Those that survive infancy show intellectual disability. Carrier females may have mild features of the disorder.</description>
        <dbReference type="MIM" id="314580"/>
    </disease>
    <text>The disease is caused by variants affecting the gene represented in this entry.</text>
</comment>
<comment type="disease" evidence="5">
    <disease id="DI-05800">
        <name>Wieacker-Wolff syndrome, female-restricted</name>
        <acronym>WRWFFR</acronym>
        <description>An X-linked dominant neurodevelopmental disorder affecting the central and peripheral nervous systems. It is characterized by onset of muscle weakness in utero resulting in fetal akinesia, arthrogryposis multiplex congenita and diffuse contractures apparent at birth, global developmental delay with difficulty walking or inability to walk, hypotonia, variably impaired intellectual development, poor or absent speech and language, and dysmorphic features.</description>
        <dbReference type="MIM" id="301041"/>
    </disease>
    <text>The disease is caused by variants affecting the gene represented in this entry.</text>
</comment>
<comment type="sequence caution" evidence="8">
    <conflict type="erroneous initiation">
        <sequence resource="EMBL-CDS" id="BAA86480"/>
    </conflict>
    <text>Extended N-terminus.</text>
</comment>
<gene>
    <name type="primary">ZC4H2</name>
    <name type="synonym">HCA127</name>
    <name type="synonym">KIAA1166</name>
</gene>
<accession>Q9NQZ6</accession>
<accession>B2RDC2</accession>
<accession>B3KVZ5</accession>
<accession>B4DED0</accession>
<accession>E7EM74</accession>
<accession>G3V1L3</accession>
<accession>Q53H73</accession>
<accession>Q5JTF9</accession>
<accession>Q9H9C3</accession>
<accession>Q9H9H7</accession>
<accession>Q9ULQ4</accession>